<proteinExistence type="inferred from homology"/>
<feature type="chain" id="PRO_0000241674" description="Large ribosomal subunit protein uL24">
    <location>
        <begin position="1"/>
        <end position="132"/>
    </location>
</feature>
<accession>Q2JIL6</accession>
<keyword id="KW-1185">Reference proteome</keyword>
<keyword id="KW-0687">Ribonucleoprotein</keyword>
<keyword id="KW-0689">Ribosomal protein</keyword>
<keyword id="KW-0694">RNA-binding</keyword>
<keyword id="KW-0699">rRNA-binding</keyword>
<evidence type="ECO:0000255" key="1">
    <source>
        <dbReference type="HAMAP-Rule" id="MF_01326"/>
    </source>
</evidence>
<evidence type="ECO:0000305" key="2"/>
<protein>
    <recommendedName>
        <fullName evidence="1">Large ribosomal subunit protein uL24</fullName>
    </recommendedName>
    <alternativeName>
        <fullName evidence="2">50S ribosomal protein L24</fullName>
    </alternativeName>
</protein>
<sequence>MVRPLKPSQIRRLVRRPGIRKHRNSLRYKMRIKQGDTVQVISGDDKGKIGEVLRVFPERNMVLVEGVNIVTYHRKPQREGESGRIETKEAPIPVCKVMAYSKKQEVASRIGYQITADGRKVRVLKKTGEILD</sequence>
<organism>
    <name type="scientific">Synechococcus sp. (strain JA-2-3B'a(2-13))</name>
    <name type="common">Cyanobacteria bacterium Yellowstone B-Prime</name>
    <dbReference type="NCBI Taxonomy" id="321332"/>
    <lineage>
        <taxon>Bacteria</taxon>
        <taxon>Bacillati</taxon>
        <taxon>Cyanobacteriota</taxon>
        <taxon>Cyanophyceae</taxon>
        <taxon>Synechococcales</taxon>
        <taxon>Synechococcaceae</taxon>
        <taxon>Synechococcus</taxon>
    </lineage>
</organism>
<name>RL24_SYNJB</name>
<comment type="function">
    <text evidence="1">One of two assembly initiator proteins, it binds directly to the 5'-end of the 23S rRNA, where it nucleates assembly of the 50S subunit.</text>
</comment>
<comment type="function">
    <text evidence="1">One of the proteins that surrounds the polypeptide exit tunnel on the outside of the subunit.</text>
</comment>
<comment type="subunit">
    <text evidence="1">Part of the 50S ribosomal subunit.</text>
</comment>
<comment type="similarity">
    <text evidence="1">Belongs to the universal ribosomal protein uL24 family.</text>
</comment>
<reference key="1">
    <citation type="journal article" date="2007" name="ISME J.">
        <title>Population level functional diversity in a microbial community revealed by comparative genomic and metagenomic analyses.</title>
        <authorList>
            <person name="Bhaya D."/>
            <person name="Grossman A.R."/>
            <person name="Steunou A.-S."/>
            <person name="Khuri N."/>
            <person name="Cohan F.M."/>
            <person name="Hamamura N."/>
            <person name="Melendrez M.C."/>
            <person name="Bateson M.M."/>
            <person name="Ward D.M."/>
            <person name="Heidelberg J.F."/>
        </authorList>
    </citation>
    <scope>NUCLEOTIDE SEQUENCE [LARGE SCALE GENOMIC DNA]</scope>
    <source>
        <strain>JA-2-3B'a(2-13)</strain>
    </source>
</reference>
<dbReference type="EMBL" id="CP000240">
    <property type="protein sequence ID" value="ABD03538.1"/>
    <property type="molecule type" value="Genomic_DNA"/>
</dbReference>
<dbReference type="RefSeq" id="WP_011434163.1">
    <property type="nucleotide sequence ID" value="NC_007776.1"/>
</dbReference>
<dbReference type="SMR" id="Q2JIL6"/>
<dbReference type="STRING" id="321332.CYB_2608"/>
<dbReference type="KEGG" id="cyb:CYB_2608"/>
<dbReference type="eggNOG" id="COG0198">
    <property type="taxonomic scope" value="Bacteria"/>
</dbReference>
<dbReference type="HOGENOM" id="CLU_093315_2_3_3"/>
<dbReference type="OrthoDB" id="9807419at2"/>
<dbReference type="Proteomes" id="UP000001938">
    <property type="component" value="Chromosome"/>
</dbReference>
<dbReference type="GO" id="GO:1990904">
    <property type="term" value="C:ribonucleoprotein complex"/>
    <property type="evidence" value="ECO:0007669"/>
    <property type="project" value="UniProtKB-KW"/>
</dbReference>
<dbReference type="GO" id="GO:0005840">
    <property type="term" value="C:ribosome"/>
    <property type="evidence" value="ECO:0007669"/>
    <property type="project" value="UniProtKB-KW"/>
</dbReference>
<dbReference type="GO" id="GO:0019843">
    <property type="term" value="F:rRNA binding"/>
    <property type="evidence" value="ECO:0007669"/>
    <property type="project" value="UniProtKB-UniRule"/>
</dbReference>
<dbReference type="GO" id="GO:0003735">
    <property type="term" value="F:structural constituent of ribosome"/>
    <property type="evidence" value="ECO:0007669"/>
    <property type="project" value="InterPro"/>
</dbReference>
<dbReference type="GO" id="GO:0006412">
    <property type="term" value="P:translation"/>
    <property type="evidence" value="ECO:0007669"/>
    <property type="project" value="UniProtKB-UniRule"/>
</dbReference>
<dbReference type="CDD" id="cd06089">
    <property type="entry name" value="KOW_RPL26"/>
    <property type="match status" value="1"/>
</dbReference>
<dbReference type="FunFam" id="2.30.30.30:FF:000004">
    <property type="entry name" value="50S ribosomal protein L24"/>
    <property type="match status" value="1"/>
</dbReference>
<dbReference type="Gene3D" id="2.30.30.30">
    <property type="match status" value="1"/>
</dbReference>
<dbReference type="HAMAP" id="MF_01326_B">
    <property type="entry name" value="Ribosomal_uL24_B"/>
    <property type="match status" value="1"/>
</dbReference>
<dbReference type="InterPro" id="IPR005824">
    <property type="entry name" value="KOW"/>
</dbReference>
<dbReference type="InterPro" id="IPR014722">
    <property type="entry name" value="Rib_uL2_dom2"/>
</dbReference>
<dbReference type="InterPro" id="IPR003256">
    <property type="entry name" value="Ribosomal_uL24"/>
</dbReference>
<dbReference type="InterPro" id="IPR005825">
    <property type="entry name" value="Ribosomal_uL24_CS"/>
</dbReference>
<dbReference type="InterPro" id="IPR041988">
    <property type="entry name" value="Ribosomal_uL24_KOW"/>
</dbReference>
<dbReference type="InterPro" id="IPR008991">
    <property type="entry name" value="Translation_prot_SH3-like_sf"/>
</dbReference>
<dbReference type="NCBIfam" id="TIGR01079">
    <property type="entry name" value="rplX_bact"/>
    <property type="match status" value="1"/>
</dbReference>
<dbReference type="PANTHER" id="PTHR12903">
    <property type="entry name" value="MITOCHONDRIAL RIBOSOMAL PROTEIN L24"/>
    <property type="match status" value="1"/>
</dbReference>
<dbReference type="Pfam" id="PF00467">
    <property type="entry name" value="KOW"/>
    <property type="match status" value="1"/>
</dbReference>
<dbReference type="Pfam" id="PF17136">
    <property type="entry name" value="ribosomal_L24"/>
    <property type="match status" value="1"/>
</dbReference>
<dbReference type="SMART" id="SM00739">
    <property type="entry name" value="KOW"/>
    <property type="match status" value="1"/>
</dbReference>
<dbReference type="SUPFAM" id="SSF50104">
    <property type="entry name" value="Translation proteins SH3-like domain"/>
    <property type="match status" value="1"/>
</dbReference>
<dbReference type="PROSITE" id="PS01108">
    <property type="entry name" value="RIBOSOMAL_L24"/>
    <property type="match status" value="1"/>
</dbReference>
<gene>
    <name evidence="1" type="primary">rplX</name>
    <name evidence="1" type="synonym">rpl24</name>
    <name type="ordered locus">CYB_2608</name>
</gene>